<dbReference type="EMBL" id="CP001581">
    <property type="protein sequence ID" value="ACO85014.1"/>
    <property type="molecule type" value="Genomic_DNA"/>
</dbReference>
<dbReference type="RefSeq" id="WP_003356629.1">
    <property type="nucleotide sequence ID" value="NC_012563.1"/>
</dbReference>
<dbReference type="SMR" id="C1FTW4"/>
<dbReference type="KEGG" id="cby:CLM_0816"/>
<dbReference type="eggNOG" id="COG0509">
    <property type="taxonomic scope" value="Bacteria"/>
</dbReference>
<dbReference type="HOGENOM" id="CLU_097408_2_2_9"/>
<dbReference type="Proteomes" id="UP000001374">
    <property type="component" value="Chromosome"/>
</dbReference>
<dbReference type="GO" id="GO:0005829">
    <property type="term" value="C:cytosol"/>
    <property type="evidence" value="ECO:0007669"/>
    <property type="project" value="TreeGrafter"/>
</dbReference>
<dbReference type="GO" id="GO:0005960">
    <property type="term" value="C:glycine cleavage complex"/>
    <property type="evidence" value="ECO:0007669"/>
    <property type="project" value="InterPro"/>
</dbReference>
<dbReference type="GO" id="GO:0019464">
    <property type="term" value="P:glycine decarboxylation via glycine cleavage system"/>
    <property type="evidence" value="ECO:0007669"/>
    <property type="project" value="UniProtKB-UniRule"/>
</dbReference>
<dbReference type="CDD" id="cd06848">
    <property type="entry name" value="GCS_H"/>
    <property type="match status" value="1"/>
</dbReference>
<dbReference type="Gene3D" id="2.40.50.100">
    <property type="match status" value="1"/>
</dbReference>
<dbReference type="HAMAP" id="MF_00272">
    <property type="entry name" value="GcvH"/>
    <property type="match status" value="1"/>
</dbReference>
<dbReference type="InterPro" id="IPR003016">
    <property type="entry name" value="2-oxoA_DH_lipoyl-BS"/>
</dbReference>
<dbReference type="InterPro" id="IPR000089">
    <property type="entry name" value="Biotin_lipoyl"/>
</dbReference>
<dbReference type="InterPro" id="IPR002930">
    <property type="entry name" value="GCV_H"/>
</dbReference>
<dbReference type="InterPro" id="IPR033753">
    <property type="entry name" value="GCV_H/Fam206"/>
</dbReference>
<dbReference type="InterPro" id="IPR017453">
    <property type="entry name" value="GCV_H_sub"/>
</dbReference>
<dbReference type="InterPro" id="IPR011053">
    <property type="entry name" value="Single_hybrid_motif"/>
</dbReference>
<dbReference type="NCBIfam" id="TIGR00527">
    <property type="entry name" value="gcvH"/>
    <property type="match status" value="1"/>
</dbReference>
<dbReference type="NCBIfam" id="NF002270">
    <property type="entry name" value="PRK01202.1"/>
    <property type="match status" value="1"/>
</dbReference>
<dbReference type="PANTHER" id="PTHR11715">
    <property type="entry name" value="GLYCINE CLEAVAGE SYSTEM H PROTEIN"/>
    <property type="match status" value="1"/>
</dbReference>
<dbReference type="PANTHER" id="PTHR11715:SF3">
    <property type="entry name" value="GLYCINE CLEAVAGE SYSTEM H PROTEIN-RELATED"/>
    <property type="match status" value="1"/>
</dbReference>
<dbReference type="Pfam" id="PF01597">
    <property type="entry name" value="GCV_H"/>
    <property type="match status" value="1"/>
</dbReference>
<dbReference type="SUPFAM" id="SSF51230">
    <property type="entry name" value="Single hybrid motif"/>
    <property type="match status" value="1"/>
</dbReference>
<dbReference type="PROSITE" id="PS50968">
    <property type="entry name" value="BIOTINYL_LIPOYL"/>
    <property type="match status" value="1"/>
</dbReference>
<dbReference type="PROSITE" id="PS00189">
    <property type="entry name" value="LIPOYL"/>
    <property type="match status" value="1"/>
</dbReference>
<sequence length="130" mass="14647">MKVLNNLLYTGDHEWIRVEDNKAYIGISDCAQRMLSDIVFVELPEVDDEIAKGETFATIESVKAASDSYMPVSGTIVEINEELEDNPAALNEDPYGSWIIAVEMSDKSELEELIKPEVYEKICEELDKEA</sequence>
<protein>
    <recommendedName>
        <fullName evidence="1">Glycine cleavage system H protein</fullName>
    </recommendedName>
</protein>
<organism>
    <name type="scientific">Clostridium botulinum (strain Kyoto / Type A2)</name>
    <dbReference type="NCBI Taxonomy" id="536232"/>
    <lineage>
        <taxon>Bacteria</taxon>
        <taxon>Bacillati</taxon>
        <taxon>Bacillota</taxon>
        <taxon>Clostridia</taxon>
        <taxon>Eubacteriales</taxon>
        <taxon>Clostridiaceae</taxon>
        <taxon>Clostridium</taxon>
    </lineage>
</organism>
<accession>C1FTW4</accession>
<name>GCSH_CLOBJ</name>
<keyword id="KW-0450">Lipoyl</keyword>
<reference key="1">
    <citation type="submission" date="2008-10" db="EMBL/GenBank/DDBJ databases">
        <title>Genome sequence of Clostridium botulinum A2 Kyoto.</title>
        <authorList>
            <person name="Shrivastava S."/>
            <person name="Brinkac L.M."/>
            <person name="Brown J.L."/>
            <person name="Bruce D."/>
            <person name="Detter C.C."/>
            <person name="Johnson E.A."/>
            <person name="Munk C.A."/>
            <person name="Smith L.A."/>
            <person name="Smith T.J."/>
            <person name="Sutton G."/>
            <person name="Brettin T.S."/>
        </authorList>
    </citation>
    <scope>NUCLEOTIDE SEQUENCE [LARGE SCALE GENOMIC DNA]</scope>
    <source>
        <strain>Kyoto / Type A2</strain>
    </source>
</reference>
<comment type="function">
    <text evidence="1">The glycine cleavage system catalyzes the degradation of glycine. The H protein shuttles the methylamine group of glycine from the P protein to the T protein.</text>
</comment>
<comment type="cofactor">
    <cofactor evidence="1">
        <name>(R)-lipoate</name>
        <dbReference type="ChEBI" id="CHEBI:83088"/>
    </cofactor>
    <text evidence="1">Binds 1 lipoyl cofactor covalently.</text>
</comment>
<comment type="subunit">
    <text evidence="1">The glycine cleavage system is composed of four proteins: P, T, L and H.</text>
</comment>
<comment type="similarity">
    <text evidence="1">Belongs to the GcvH family.</text>
</comment>
<gene>
    <name evidence="1" type="primary">gcvH</name>
    <name type="ordered locus">CLM_0816</name>
</gene>
<feature type="chain" id="PRO_1000190196" description="Glycine cleavage system H protein">
    <location>
        <begin position="1"/>
        <end position="130"/>
    </location>
</feature>
<feature type="domain" description="Lipoyl-binding" evidence="2">
    <location>
        <begin position="22"/>
        <end position="103"/>
    </location>
</feature>
<feature type="modified residue" description="N6-lipoyllysine" evidence="1">
    <location>
        <position position="63"/>
    </location>
</feature>
<proteinExistence type="inferred from homology"/>
<evidence type="ECO:0000255" key="1">
    <source>
        <dbReference type="HAMAP-Rule" id="MF_00272"/>
    </source>
</evidence>
<evidence type="ECO:0000255" key="2">
    <source>
        <dbReference type="PROSITE-ProRule" id="PRU01066"/>
    </source>
</evidence>